<reference key="1">
    <citation type="journal article" date="2004" name="Science">
        <title>A predator unmasked: life cycle of Bdellovibrio bacteriovorus from a genomic perspective.</title>
        <authorList>
            <person name="Rendulic S."/>
            <person name="Jagtap P."/>
            <person name="Rosinus A."/>
            <person name="Eppinger M."/>
            <person name="Baar C."/>
            <person name="Lanz C."/>
            <person name="Keller H."/>
            <person name="Lambert C."/>
            <person name="Evans K.J."/>
            <person name="Goesmann A."/>
            <person name="Meyer F."/>
            <person name="Sockett R.E."/>
            <person name="Schuster S.C."/>
        </authorList>
    </citation>
    <scope>NUCLEOTIDE SEQUENCE [LARGE SCALE GENOMIC DNA]</scope>
    <source>
        <strain>ATCC 15356 / DSM 50701 / NCIMB 9529 / HD100</strain>
    </source>
</reference>
<name>SYM_BDEBA</name>
<evidence type="ECO:0000255" key="1">
    <source>
        <dbReference type="HAMAP-Rule" id="MF_00098"/>
    </source>
</evidence>
<organism>
    <name type="scientific">Bdellovibrio bacteriovorus (strain ATCC 15356 / DSM 50701 / NCIMB 9529 / HD100)</name>
    <dbReference type="NCBI Taxonomy" id="264462"/>
    <lineage>
        <taxon>Bacteria</taxon>
        <taxon>Pseudomonadati</taxon>
        <taxon>Bdellovibrionota</taxon>
        <taxon>Bdellovibrionia</taxon>
        <taxon>Bdellovibrionales</taxon>
        <taxon>Pseudobdellovibrionaceae</taxon>
        <taxon>Bdellovibrio</taxon>
    </lineage>
</organism>
<keyword id="KW-0030">Aminoacyl-tRNA synthetase</keyword>
<keyword id="KW-0067">ATP-binding</keyword>
<keyword id="KW-0963">Cytoplasm</keyword>
<keyword id="KW-0436">Ligase</keyword>
<keyword id="KW-0479">Metal-binding</keyword>
<keyword id="KW-0547">Nucleotide-binding</keyword>
<keyword id="KW-0648">Protein biosynthesis</keyword>
<keyword id="KW-1185">Reference proteome</keyword>
<keyword id="KW-0694">RNA-binding</keyword>
<keyword id="KW-0820">tRNA-binding</keyword>
<keyword id="KW-0862">Zinc</keyword>
<protein>
    <recommendedName>
        <fullName evidence="1">Methionine--tRNA ligase</fullName>
        <ecNumber evidence="1">6.1.1.10</ecNumber>
    </recommendedName>
    <alternativeName>
        <fullName evidence="1">Methionyl-tRNA synthetase</fullName>
        <shortName evidence="1">MetRS</shortName>
    </alternativeName>
</protein>
<dbReference type="EC" id="6.1.1.10" evidence="1"/>
<dbReference type="EMBL" id="BX842650">
    <property type="protein sequence ID" value="CAE79602.1"/>
    <property type="molecule type" value="Genomic_DNA"/>
</dbReference>
<dbReference type="RefSeq" id="WP_011164204.1">
    <property type="nucleotide sequence ID" value="NC_005363.1"/>
</dbReference>
<dbReference type="SMR" id="Q6MMA3"/>
<dbReference type="STRING" id="264462.Bd1733"/>
<dbReference type="GeneID" id="93012714"/>
<dbReference type="KEGG" id="bba:Bd1733"/>
<dbReference type="eggNOG" id="COG0073">
    <property type="taxonomic scope" value="Bacteria"/>
</dbReference>
<dbReference type="eggNOG" id="COG0143">
    <property type="taxonomic scope" value="Bacteria"/>
</dbReference>
<dbReference type="HOGENOM" id="CLU_009710_7_0_7"/>
<dbReference type="Proteomes" id="UP000008080">
    <property type="component" value="Chromosome"/>
</dbReference>
<dbReference type="GO" id="GO:0005829">
    <property type="term" value="C:cytosol"/>
    <property type="evidence" value="ECO:0007669"/>
    <property type="project" value="TreeGrafter"/>
</dbReference>
<dbReference type="GO" id="GO:0005524">
    <property type="term" value="F:ATP binding"/>
    <property type="evidence" value="ECO:0007669"/>
    <property type="project" value="UniProtKB-UniRule"/>
</dbReference>
<dbReference type="GO" id="GO:0046872">
    <property type="term" value="F:metal ion binding"/>
    <property type="evidence" value="ECO:0007669"/>
    <property type="project" value="UniProtKB-KW"/>
</dbReference>
<dbReference type="GO" id="GO:0004825">
    <property type="term" value="F:methionine-tRNA ligase activity"/>
    <property type="evidence" value="ECO:0007669"/>
    <property type="project" value="UniProtKB-UniRule"/>
</dbReference>
<dbReference type="GO" id="GO:0000049">
    <property type="term" value="F:tRNA binding"/>
    <property type="evidence" value="ECO:0007669"/>
    <property type="project" value="UniProtKB-KW"/>
</dbReference>
<dbReference type="GO" id="GO:0006431">
    <property type="term" value="P:methionyl-tRNA aminoacylation"/>
    <property type="evidence" value="ECO:0007669"/>
    <property type="project" value="UniProtKB-UniRule"/>
</dbReference>
<dbReference type="CDD" id="cd07957">
    <property type="entry name" value="Anticodon_Ia_Met"/>
    <property type="match status" value="1"/>
</dbReference>
<dbReference type="CDD" id="cd00814">
    <property type="entry name" value="MetRS_core"/>
    <property type="match status" value="1"/>
</dbReference>
<dbReference type="CDD" id="cd02800">
    <property type="entry name" value="tRNA_bind_EcMetRS_like"/>
    <property type="match status" value="1"/>
</dbReference>
<dbReference type="FunFam" id="2.20.28.20:FF:000001">
    <property type="entry name" value="Methionine--tRNA ligase"/>
    <property type="match status" value="1"/>
</dbReference>
<dbReference type="FunFam" id="2.40.50.140:FF:000042">
    <property type="entry name" value="Methionine--tRNA ligase"/>
    <property type="match status" value="1"/>
</dbReference>
<dbReference type="Gene3D" id="3.40.50.620">
    <property type="entry name" value="HUPs"/>
    <property type="match status" value="1"/>
</dbReference>
<dbReference type="Gene3D" id="1.10.730.10">
    <property type="entry name" value="Isoleucyl-tRNA Synthetase, Domain 1"/>
    <property type="match status" value="1"/>
</dbReference>
<dbReference type="Gene3D" id="2.20.28.20">
    <property type="entry name" value="Methionyl-tRNA synthetase, Zn-domain"/>
    <property type="match status" value="1"/>
</dbReference>
<dbReference type="Gene3D" id="2.40.50.140">
    <property type="entry name" value="Nucleic acid-binding proteins"/>
    <property type="match status" value="1"/>
</dbReference>
<dbReference type="HAMAP" id="MF_00098">
    <property type="entry name" value="Met_tRNA_synth_type1"/>
    <property type="match status" value="1"/>
</dbReference>
<dbReference type="InterPro" id="IPR001412">
    <property type="entry name" value="aa-tRNA-synth_I_CS"/>
</dbReference>
<dbReference type="InterPro" id="IPR041872">
    <property type="entry name" value="Anticodon_Met"/>
</dbReference>
<dbReference type="InterPro" id="IPR004495">
    <property type="entry name" value="Met-tRNA-synth_bsu_C"/>
</dbReference>
<dbReference type="InterPro" id="IPR023458">
    <property type="entry name" value="Met-tRNA_ligase_1"/>
</dbReference>
<dbReference type="InterPro" id="IPR014758">
    <property type="entry name" value="Met-tRNA_synth"/>
</dbReference>
<dbReference type="InterPro" id="IPR015413">
    <property type="entry name" value="Methionyl/Leucyl_tRNA_Synth"/>
</dbReference>
<dbReference type="InterPro" id="IPR033911">
    <property type="entry name" value="MetRS_core"/>
</dbReference>
<dbReference type="InterPro" id="IPR029038">
    <property type="entry name" value="MetRS_Zn"/>
</dbReference>
<dbReference type="InterPro" id="IPR012340">
    <property type="entry name" value="NA-bd_OB-fold"/>
</dbReference>
<dbReference type="InterPro" id="IPR014729">
    <property type="entry name" value="Rossmann-like_a/b/a_fold"/>
</dbReference>
<dbReference type="InterPro" id="IPR002547">
    <property type="entry name" value="tRNA-bd_dom"/>
</dbReference>
<dbReference type="InterPro" id="IPR009080">
    <property type="entry name" value="tRNAsynth_Ia_anticodon-bd"/>
</dbReference>
<dbReference type="NCBIfam" id="TIGR00398">
    <property type="entry name" value="metG"/>
    <property type="match status" value="1"/>
</dbReference>
<dbReference type="NCBIfam" id="TIGR00399">
    <property type="entry name" value="metG_C_term"/>
    <property type="match status" value="1"/>
</dbReference>
<dbReference type="NCBIfam" id="NF001100">
    <property type="entry name" value="PRK00133.1"/>
    <property type="match status" value="1"/>
</dbReference>
<dbReference type="PANTHER" id="PTHR45765">
    <property type="entry name" value="METHIONINE--TRNA LIGASE"/>
    <property type="match status" value="1"/>
</dbReference>
<dbReference type="PANTHER" id="PTHR45765:SF1">
    <property type="entry name" value="METHIONINE--TRNA LIGASE, CYTOPLASMIC"/>
    <property type="match status" value="1"/>
</dbReference>
<dbReference type="Pfam" id="PF19303">
    <property type="entry name" value="Anticodon_3"/>
    <property type="match status" value="1"/>
</dbReference>
<dbReference type="Pfam" id="PF09334">
    <property type="entry name" value="tRNA-synt_1g"/>
    <property type="match status" value="1"/>
</dbReference>
<dbReference type="Pfam" id="PF01588">
    <property type="entry name" value="tRNA_bind"/>
    <property type="match status" value="1"/>
</dbReference>
<dbReference type="PRINTS" id="PR01041">
    <property type="entry name" value="TRNASYNTHMET"/>
</dbReference>
<dbReference type="SUPFAM" id="SSF47323">
    <property type="entry name" value="Anticodon-binding domain of a subclass of class I aminoacyl-tRNA synthetases"/>
    <property type="match status" value="1"/>
</dbReference>
<dbReference type="SUPFAM" id="SSF57770">
    <property type="entry name" value="Methionyl-tRNA synthetase (MetRS), Zn-domain"/>
    <property type="match status" value="1"/>
</dbReference>
<dbReference type="SUPFAM" id="SSF50249">
    <property type="entry name" value="Nucleic acid-binding proteins"/>
    <property type="match status" value="1"/>
</dbReference>
<dbReference type="SUPFAM" id="SSF52374">
    <property type="entry name" value="Nucleotidylyl transferase"/>
    <property type="match status" value="1"/>
</dbReference>
<dbReference type="PROSITE" id="PS00178">
    <property type="entry name" value="AA_TRNA_LIGASE_I"/>
    <property type="match status" value="1"/>
</dbReference>
<dbReference type="PROSITE" id="PS50886">
    <property type="entry name" value="TRBD"/>
    <property type="match status" value="1"/>
</dbReference>
<comment type="function">
    <text evidence="1">Is required not only for elongation of protein synthesis but also for the initiation of all mRNA translation through initiator tRNA(fMet) aminoacylation.</text>
</comment>
<comment type="catalytic activity">
    <reaction evidence="1">
        <text>tRNA(Met) + L-methionine + ATP = L-methionyl-tRNA(Met) + AMP + diphosphate</text>
        <dbReference type="Rhea" id="RHEA:13481"/>
        <dbReference type="Rhea" id="RHEA-COMP:9667"/>
        <dbReference type="Rhea" id="RHEA-COMP:9698"/>
        <dbReference type="ChEBI" id="CHEBI:30616"/>
        <dbReference type="ChEBI" id="CHEBI:33019"/>
        <dbReference type="ChEBI" id="CHEBI:57844"/>
        <dbReference type="ChEBI" id="CHEBI:78442"/>
        <dbReference type="ChEBI" id="CHEBI:78530"/>
        <dbReference type="ChEBI" id="CHEBI:456215"/>
        <dbReference type="EC" id="6.1.1.10"/>
    </reaction>
</comment>
<comment type="cofactor">
    <cofactor evidence="1">
        <name>Zn(2+)</name>
        <dbReference type="ChEBI" id="CHEBI:29105"/>
    </cofactor>
    <text evidence="1">Binds 1 zinc ion per subunit.</text>
</comment>
<comment type="subunit">
    <text evidence="1">Homodimer.</text>
</comment>
<comment type="subcellular location">
    <subcellularLocation>
        <location evidence="1">Cytoplasm</location>
    </subcellularLocation>
</comment>
<comment type="similarity">
    <text evidence="1">Belongs to the class-I aminoacyl-tRNA synthetase family. MetG type 1 subfamily.</text>
</comment>
<accession>Q6MMA3</accession>
<proteinExistence type="inferred from homology"/>
<gene>
    <name evidence="1" type="primary">metG</name>
    <name type="ordered locus">Bd1733</name>
</gene>
<feature type="chain" id="PRO_0000139104" description="Methionine--tRNA ligase">
    <location>
        <begin position="1"/>
        <end position="687"/>
    </location>
</feature>
<feature type="domain" description="tRNA-binding" evidence="1">
    <location>
        <begin position="585"/>
        <end position="687"/>
    </location>
</feature>
<feature type="short sequence motif" description="'HIGH' region">
    <location>
        <begin position="14"/>
        <end position="24"/>
    </location>
</feature>
<feature type="short sequence motif" description="'KMSKS' region">
    <location>
        <begin position="329"/>
        <end position="333"/>
    </location>
</feature>
<feature type="binding site" evidence="1">
    <location>
        <position position="145"/>
    </location>
    <ligand>
        <name>Zn(2+)</name>
        <dbReference type="ChEBI" id="CHEBI:29105"/>
    </ligand>
</feature>
<feature type="binding site" evidence="1">
    <location>
        <position position="148"/>
    </location>
    <ligand>
        <name>Zn(2+)</name>
        <dbReference type="ChEBI" id="CHEBI:29105"/>
    </ligand>
</feature>
<feature type="binding site" evidence="1">
    <location>
        <position position="158"/>
    </location>
    <ligand>
        <name>Zn(2+)</name>
        <dbReference type="ChEBI" id="CHEBI:29105"/>
    </ligand>
</feature>
<feature type="binding site" evidence="1">
    <location>
        <position position="161"/>
    </location>
    <ligand>
        <name>Zn(2+)</name>
        <dbReference type="ChEBI" id="CHEBI:29105"/>
    </ligand>
</feature>
<feature type="binding site" evidence="1">
    <location>
        <position position="332"/>
    </location>
    <ligand>
        <name>ATP</name>
        <dbReference type="ChEBI" id="CHEBI:30616"/>
    </ligand>
</feature>
<sequence length="687" mass="77726">MNDKRKILITCALPYANGYIHLGHLVEYLQADFWARFQNMRGNECVFICADDTHGTPIMVKARELGITPEALIAQSYKEHTQDFADFQVQFSHFGSTNSEENRLLCEYFYKKMQEGNHTRSQPIQQMYCNHDKMFLPDRFVKGTCPKCGAKEQYGDSCDVCASTYSPSDMKDVHCSLCGTAPVMKDSESIFFKLNDFKQYLEEWIPKHCSPEISKKMLEWFNEDLKDLDISRDEPYFGFAIPGTNNKKFFYVWVDAPMGYMSTTEQWAKSQGKTLKDIWQDPSREIYHFIGKDIARFHTIFWPAFLKAAEFRSPNQVFVHGHLMVNGEKMSKSKGTFIAARTYLNHLNPEYLRYYYSTKLSSSVDDIDLNLEDFTNRVNSELVGKITNLGSRGGQMLKKKMDGKMSVPDAEGKKLIEHAQKTAESIAAHYEARDFAKALGEIRGLADDANKYFDEKAPWKTLEADPEGTKQVITTTLNMFRMLAIYLKPVLPFYSQKVAKLLGEKDYVWSDLNTVLTNREINDYEHLATRIEADKVKAMVEEGRKINEEIQAAKKAASTAKPAAAPAPAAAATAGDRPAEIEFADFDKVDLRIGQVIEAEEIKEADKLLRLKIDIGEGQIRQIISGIKAAYKPEQLVGRKVLVCVNLKPRKMKFGMSEGMVLAAGTGGSDLFVLSADDGAQVGQRVK</sequence>